<proteinExistence type="inferred from homology"/>
<protein>
    <recommendedName>
        <fullName evidence="1">Large ribosomal subunit protein bL31</fullName>
    </recommendedName>
    <alternativeName>
        <fullName evidence="2">50S ribosomal protein L31</fullName>
    </alternativeName>
</protein>
<organism>
    <name type="scientific">Yersinia pseudotuberculosis serotype IB (strain PB1/+)</name>
    <dbReference type="NCBI Taxonomy" id="502801"/>
    <lineage>
        <taxon>Bacteria</taxon>
        <taxon>Pseudomonadati</taxon>
        <taxon>Pseudomonadota</taxon>
        <taxon>Gammaproteobacteria</taxon>
        <taxon>Enterobacterales</taxon>
        <taxon>Yersiniaceae</taxon>
        <taxon>Yersinia</taxon>
    </lineage>
</organism>
<keyword id="KW-0479">Metal-binding</keyword>
<keyword id="KW-0687">Ribonucleoprotein</keyword>
<keyword id="KW-0689">Ribosomal protein</keyword>
<keyword id="KW-0694">RNA-binding</keyword>
<keyword id="KW-0699">rRNA-binding</keyword>
<keyword id="KW-0862">Zinc</keyword>
<gene>
    <name evidence="1" type="primary">rpmE</name>
    <name type="ordered locus">YPTS_0105</name>
</gene>
<sequence>MKQGIHPKYEQVTASCSCGNVIKINSTVGHDLNLDVCGECHPFYTGKQRDVASGGRVDRFNKRFSVPGAKK</sequence>
<feature type="chain" id="PRO_1000126770" description="Large ribosomal subunit protein bL31">
    <location>
        <begin position="1"/>
        <end position="71"/>
    </location>
</feature>
<feature type="binding site" evidence="1">
    <location>
        <position position="16"/>
    </location>
    <ligand>
        <name>Zn(2+)</name>
        <dbReference type="ChEBI" id="CHEBI:29105"/>
    </ligand>
</feature>
<feature type="binding site" evidence="1">
    <location>
        <position position="18"/>
    </location>
    <ligand>
        <name>Zn(2+)</name>
        <dbReference type="ChEBI" id="CHEBI:29105"/>
    </ligand>
</feature>
<feature type="binding site" evidence="1">
    <location>
        <position position="37"/>
    </location>
    <ligand>
        <name>Zn(2+)</name>
        <dbReference type="ChEBI" id="CHEBI:29105"/>
    </ligand>
</feature>
<feature type="binding site" evidence="1">
    <location>
        <position position="40"/>
    </location>
    <ligand>
        <name>Zn(2+)</name>
        <dbReference type="ChEBI" id="CHEBI:29105"/>
    </ligand>
</feature>
<name>RL31_YERPB</name>
<dbReference type="EMBL" id="CP001048">
    <property type="protein sequence ID" value="ACC87104.1"/>
    <property type="molecule type" value="Genomic_DNA"/>
</dbReference>
<dbReference type="RefSeq" id="WP_002216737.1">
    <property type="nucleotide sequence ID" value="NZ_CP009780.1"/>
</dbReference>
<dbReference type="SMR" id="B2JZD1"/>
<dbReference type="GeneID" id="96663581"/>
<dbReference type="KEGG" id="ypb:YPTS_0105"/>
<dbReference type="PATRIC" id="fig|502801.10.peg.3783"/>
<dbReference type="GO" id="GO:1990904">
    <property type="term" value="C:ribonucleoprotein complex"/>
    <property type="evidence" value="ECO:0007669"/>
    <property type="project" value="UniProtKB-KW"/>
</dbReference>
<dbReference type="GO" id="GO:0005840">
    <property type="term" value="C:ribosome"/>
    <property type="evidence" value="ECO:0007669"/>
    <property type="project" value="UniProtKB-KW"/>
</dbReference>
<dbReference type="GO" id="GO:0046872">
    <property type="term" value="F:metal ion binding"/>
    <property type="evidence" value="ECO:0007669"/>
    <property type="project" value="UniProtKB-KW"/>
</dbReference>
<dbReference type="GO" id="GO:0019843">
    <property type="term" value="F:rRNA binding"/>
    <property type="evidence" value="ECO:0007669"/>
    <property type="project" value="UniProtKB-KW"/>
</dbReference>
<dbReference type="GO" id="GO:0003735">
    <property type="term" value="F:structural constituent of ribosome"/>
    <property type="evidence" value="ECO:0007669"/>
    <property type="project" value="InterPro"/>
</dbReference>
<dbReference type="GO" id="GO:0006412">
    <property type="term" value="P:translation"/>
    <property type="evidence" value="ECO:0007669"/>
    <property type="project" value="UniProtKB-UniRule"/>
</dbReference>
<dbReference type="FunFam" id="4.10.830.30:FF:000001">
    <property type="entry name" value="50S ribosomal protein L31"/>
    <property type="match status" value="1"/>
</dbReference>
<dbReference type="Gene3D" id="4.10.830.30">
    <property type="entry name" value="Ribosomal protein L31"/>
    <property type="match status" value="1"/>
</dbReference>
<dbReference type="HAMAP" id="MF_00501">
    <property type="entry name" value="Ribosomal_bL31_1"/>
    <property type="match status" value="1"/>
</dbReference>
<dbReference type="InterPro" id="IPR034704">
    <property type="entry name" value="Ribosomal_bL28/bL31-like_sf"/>
</dbReference>
<dbReference type="InterPro" id="IPR002150">
    <property type="entry name" value="Ribosomal_bL31"/>
</dbReference>
<dbReference type="InterPro" id="IPR027491">
    <property type="entry name" value="Ribosomal_bL31_A"/>
</dbReference>
<dbReference type="InterPro" id="IPR042105">
    <property type="entry name" value="Ribosomal_bL31_sf"/>
</dbReference>
<dbReference type="NCBIfam" id="TIGR00105">
    <property type="entry name" value="L31"/>
    <property type="match status" value="1"/>
</dbReference>
<dbReference type="NCBIfam" id="NF000612">
    <property type="entry name" value="PRK00019.1"/>
    <property type="match status" value="1"/>
</dbReference>
<dbReference type="PANTHER" id="PTHR33280">
    <property type="entry name" value="50S RIBOSOMAL PROTEIN L31, CHLOROPLASTIC"/>
    <property type="match status" value="1"/>
</dbReference>
<dbReference type="PANTHER" id="PTHR33280:SF6">
    <property type="entry name" value="LARGE RIBOSOMAL SUBUNIT PROTEIN BL31A"/>
    <property type="match status" value="1"/>
</dbReference>
<dbReference type="Pfam" id="PF01197">
    <property type="entry name" value="Ribosomal_L31"/>
    <property type="match status" value="1"/>
</dbReference>
<dbReference type="PRINTS" id="PR01249">
    <property type="entry name" value="RIBOSOMALL31"/>
</dbReference>
<dbReference type="SUPFAM" id="SSF143800">
    <property type="entry name" value="L28p-like"/>
    <property type="match status" value="1"/>
</dbReference>
<dbReference type="PROSITE" id="PS01143">
    <property type="entry name" value="RIBOSOMAL_L31"/>
    <property type="match status" value="1"/>
</dbReference>
<evidence type="ECO:0000255" key="1">
    <source>
        <dbReference type="HAMAP-Rule" id="MF_00501"/>
    </source>
</evidence>
<evidence type="ECO:0000305" key="2"/>
<accession>B2JZD1</accession>
<comment type="function">
    <text evidence="1">Binds the 23S rRNA.</text>
</comment>
<comment type="cofactor">
    <cofactor evidence="1">
        <name>Zn(2+)</name>
        <dbReference type="ChEBI" id="CHEBI:29105"/>
    </cofactor>
    <text evidence="1">Binds 1 zinc ion per subunit.</text>
</comment>
<comment type="subunit">
    <text evidence="1">Part of the 50S ribosomal subunit.</text>
</comment>
<comment type="similarity">
    <text evidence="1">Belongs to the bacterial ribosomal protein bL31 family. Type A subfamily.</text>
</comment>
<reference key="1">
    <citation type="submission" date="2008-04" db="EMBL/GenBank/DDBJ databases">
        <title>Complete sequence of Yersinia pseudotuberculosis PB1/+.</title>
        <authorList>
            <person name="Copeland A."/>
            <person name="Lucas S."/>
            <person name="Lapidus A."/>
            <person name="Glavina del Rio T."/>
            <person name="Dalin E."/>
            <person name="Tice H."/>
            <person name="Bruce D."/>
            <person name="Goodwin L."/>
            <person name="Pitluck S."/>
            <person name="Munk A.C."/>
            <person name="Brettin T."/>
            <person name="Detter J.C."/>
            <person name="Han C."/>
            <person name="Tapia R."/>
            <person name="Schmutz J."/>
            <person name="Larimer F."/>
            <person name="Land M."/>
            <person name="Hauser L."/>
            <person name="Challacombe J.F."/>
            <person name="Green L."/>
            <person name="Lindler L.E."/>
            <person name="Nikolich M.P."/>
            <person name="Richardson P."/>
        </authorList>
    </citation>
    <scope>NUCLEOTIDE SEQUENCE [LARGE SCALE GENOMIC DNA]</scope>
    <source>
        <strain>PB1/+</strain>
    </source>
</reference>